<feature type="chain" id="PRO_0000093284" description="Uncharacterized ABC transporter ATP-binding protein sll0182">
    <location>
        <begin position="1"/>
        <end position="661"/>
    </location>
</feature>
<feature type="transmembrane region" description="Helical" evidence="2">
    <location>
        <begin position="37"/>
        <end position="57"/>
    </location>
</feature>
<feature type="transmembrane region" description="Helical" evidence="2">
    <location>
        <begin position="87"/>
        <end position="107"/>
    </location>
</feature>
<feature type="transmembrane region" description="Helical" evidence="2">
    <location>
        <begin position="120"/>
        <end position="140"/>
    </location>
</feature>
<feature type="transmembrane region" description="Helical" evidence="2">
    <location>
        <begin position="158"/>
        <end position="178"/>
    </location>
</feature>
<feature type="transmembrane region" description="Helical" evidence="2">
    <location>
        <begin position="243"/>
        <end position="263"/>
    </location>
</feature>
<feature type="transmembrane region" description="Helical" evidence="2">
    <location>
        <begin position="266"/>
        <end position="286"/>
    </location>
</feature>
<feature type="transmembrane region" description="Helical" evidence="2">
    <location>
        <begin position="341"/>
        <end position="361"/>
    </location>
</feature>
<feature type="domain" description="ABC transmembrane type-1" evidence="2">
    <location>
        <begin position="123"/>
        <end position="410"/>
    </location>
</feature>
<feature type="domain" description="ABC transporter" evidence="1">
    <location>
        <begin position="453"/>
        <end position="659"/>
    </location>
</feature>
<feature type="binding site" evidence="1">
    <location>
        <begin position="487"/>
        <end position="494"/>
    </location>
    <ligand>
        <name>ATP</name>
        <dbReference type="ChEBI" id="CHEBI:30616"/>
    </ligand>
</feature>
<organism>
    <name type="scientific">Synechocystis sp. (strain ATCC 27184 / PCC 6803 / Kazusa)</name>
    <dbReference type="NCBI Taxonomy" id="1111708"/>
    <lineage>
        <taxon>Bacteria</taxon>
        <taxon>Bacillati</taxon>
        <taxon>Cyanobacteriota</taxon>
        <taxon>Cyanophyceae</taxon>
        <taxon>Synechococcales</taxon>
        <taxon>Merismopediaceae</taxon>
        <taxon>Synechocystis</taxon>
    </lineage>
</organism>
<comment type="subcellular location">
    <subcellularLocation>
        <location evidence="3">Cell inner membrane</location>
        <topology evidence="2">Multi-pass membrane protein</topology>
    </subcellularLocation>
</comment>
<comment type="similarity">
    <text evidence="3">Belongs to the ABC transporter superfamily.</text>
</comment>
<name>Y182_SYNY3</name>
<sequence length="661" mass="74273">MTQAQAKRFQFDRQLWHRFVETAQPYFYPVGQKQTRVFLGLILALMVVVVALTLFLSMGLTLWATAIFPDFFAKSGEGLVDGVQGLINSPAPWIGLVALAMAGAVFISQRQKLQQRWLQWLLLGVLLSLLFVVNGLNVILSFVFRFIDTALNGKDAEVFWQFLWIYGIVIVVAIPIIVAYRYLRQKLGVLWRQWLTEHFLGRYFKGRSYYHLDSNSAYTLIDNPDQRITQDIQSFTGVTLDFLLDILDSILTLISFTAILYTISQTLMWGLIGYAVFGTVVAIAIGTRLIRINYEQLRLEANFRYGLVRVRDNAESIAFYRGEGLERKQVTDRLLGAIRNFNLLIIWQALISLFQLGYNYFTRLIPYIIIAPLYLAGDLDFGAIAQASLAFGMVLSALSLVTNQIQNITEFAASINRLGEFYESLNGPSNELERPESTGFDHNVITTRIGATVALENVTLSPPNSSRILVRDLSLAVAPGNHLLIMGPSGSGKSSLLRAIAGLWDSGQGTIERPELADLLFLPQRPYMILGTLREQLIYPSAQSIADDDFLLETLNKVNLPDLAERFGGLDSLENWSSVLSLGEQQRIALARVFINQPRYAILDEATSALDVNNEAELYHALTDLGTTFISVGHRPTLRNFHRQCLEVQAEGRWQISPINN</sequence>
<evidence type="ECO:0000255" key="1">
    <source>
        <dbReference type="PROSITE-ProRule" id="PRU00434"/>
    </source>
</evidence>
<evidence type="ECO:0000255" key="2">
    <source>
        <dbReference type="PROSITE-ProRule" id="PRU00441"/>
    </source>
</evidence>
<evidence type="ECO:0000305" key="3"/>
<reference key="1">
    <citation type="journal article" date="1995" name="DNA Res.">
        <title>Sequence analysis of the genome of the unicellular cyanobacterium Synechocystis sp. strain PCC6803. I. Sequence features in the 1 Mb region from map positions 64% to 92% of the genome.</title>
        <authorList>
            <person name="Kaneko T."/>
            <person name="Tanaka A."/>
            <person name="Sato S."/>
            <person name="Kotani H."/>
            <person name="Sazuka T."/>
            <person name="Miyajima N."/>
            <person name="Sugiura M."/>
            <person name="Tabata S."/>
        </authorList>
    </citation>
    <scope>NUCLEOTIDE SEQUENCE [LARGE SCALE GENOMIC DNA]</scope>
    <source>
        <strain>ATCC 27184 / PCC 6803 / N-1</strain>
    </source>
</reference>
<reference key="2">
    <citation type="journal article" date="1996" name="DNA Res.">
        <title>Sequence analysis of the genome of the unicellular cyanobacterium Synechocystis sp. strain PCC6803. II. Sequence determination of the entire genome and assignment of potential protein-coding regions.</title>
        <authorList>
            <person name="Kaneko T."/>
            <person name="Sato S."/>
            <person name="Kotani H."/>
            <person name="Tanaka A."/>
            <person name="Asamizu E."/>
            <person name="Nakamura Y."/>
            <person name="Miyajima N."/>
            <person name="Hirosawa M."/>
            <person name="Sugiura M."/>
            <person name="Sasamoto S."/>
            <person name="Kimura T."/>
            <person name="Hosouchi T."/>
            <person name="Matsuno A."/>
            <person name="Muraki A."/>
            <person name="Nakazaki N."/>
            <person name="Naruo K."/>
            <person name="Okumura S."/>
            <person name="Shimpo S."/>
            <person name="Takeuchi C."/>
            <person name="Wada T."/>
            <person name="Watanabe A."/>
            <person name="Yamada M."/>
            <person name="Yasuda M."/>
            <person name="Tabata S."/>
        </authorList>
    </citation>
    <scope>NUCLEOTIDE SEQUENCE [LARGE SCALE GENOMIC DNA]</scope>
    <source>
        <strain>ATCC 27184 / PCC 6803 / Kazusa</strain>
    </source>
</reference>
<dbReference type="EMBL" id="BA000022">
    <property type="protein sequence ID" value="BAA10424.1"/>
    <property type="molecule type" value="Genomic_DNA"/>
</dbReference>
<dbReference type="PIR" id="S76578">
    <property type="entry name" value="S76578"/>
</dbReference>
<dbReference type="SMR" id="Q55774"/>
<dbReference type="IntAct" id="Q55774">
    <property type="interactions" value="7"/>
</dbReference>
<dbReference type="STRING" id="1148.gene:10499925"/>
<dbReference type="PaxDb" id="1148-1001688"/>
<dbReference type="EnsemblBacteria" id="BAA10424">
    <property type="protein sequence ID" value="BAA10424"/>
    <property type="gene ID" value="BAA10424"/>
</dbReference>
<dbReference type="KEGG" id="syn:sll0182"/>
<dbReference type="eggNOG" id="COG4178">
    <property type="taxonomic scope" value="Bacteria"/>
</dbReference>
<dbReference type="InParanoid" id="Q55774"/>
<dbReference type="PhylomeDB" id="Q55774"/>
<dbReference type="Proteomes" id="UP000001425">
    <property type="component" value="Chromosome"/>
</dbReference>
<dbReference type="GO" id="GO:0005886">
    <property type="term" value="C:plasma membrane"/>
    <property type="evidence" value="ECO:0007669"/>
    <property type="project" value="UniProtKB-SubCell"/>
</dbReference>
<dbReference type="GO" id="GO:0140359">
    <property type="term" value="F:ABC-type transporter activity"/>
    <property type="evidence" value="ECO:0007669"/>
    <property type="project" value="InterPro"/>
</dbReference>
<dbReference type="GO" id="GO:0005524">
    <property type="term" value="F:ATP binding"/>
    <property type="evidence" value="ECO:0007669"/>
    <property type="project" value="UniProtKB-KW"/>
</dbReference>
<dbReference type="GO" id="GO:0016887">
    <property type="term" value="F:ATP hydrolysis activity"/>
    <property type="evidence" value="ECO:0007669"/>
    <property type="project" value="InterPro"/>
</dbReference>
<dbReference type="CDD" id="cd03223">
    <property type="entry name" value="ABCD_peroxisomal_ALDP"/>
    <property type="match status" value="1"/>
</dbReference>
<dbReference type="Gene3D" id="1.20.1560.10">
    <property type="entry name" value="ABC transporter type 1, transmembrane domain"/>
    <property type="match status" value="1"/>
</dbReference>
<dbReference type="Gene3D" id="3.40.50.300">
    <property type="entry name" value="P-loop containing nucleotide triphosphate hydrolases"/>
    <property type="match status" value="1"/>
</dbReference>
<dbReference type="InterPro" id="IPR003593">
    <property type="entry name" value="AAA+_ATPase"/>
</dbReference>
<dbReference type="InterPro" id="IPR011527">
    <property type="entry name" value="ABC1_TM_dom"/>
</dbReference>
<dbReference type="InterPro" id="IPR036640">
    <property type="entry name" value="ABC1_TM_sf"/>
</dbReference>
<dbReference type="InterPro" id="IPR003439">
    <property type="entry name" value="ABC_transporter-like_ATP-bd"/>
</dbReference>
<dbReference type="InterPro" id="IPR017871">
    <property type="entry name" value="ABC_transporter-like_CS"/>
</dbReference>
<dbReference type="InterPro" id="IPR050835">
    <property type="entry name" value="ABC_transporter_sub-D"/>
</dbReference>
<dbReference type="InterPro" id="IPR027417">
    <property type="entry name" value="P-loop_NTPase"/>
</dbReference>
<dbReference type="PANTHER" id="PTHR11384">
    <property type="entry name" value="ATP-BINDING CASSETTE, SUB-FAMILY D MEMBER"/>
    <property type="match status" value="1"/>
</dbReference>
<dbReference type="PANTHER" id="PTHR11384:SF59">
    <property type="entry name" value="LYSOSOMAL COBALAMIN TRANSPORTER ABCD4"/>
    <property type="match status" value="1"/>
</dbReference>
<dbReference type="Pfam" id="PF06472">
    <property type="entry name" value="ABC_membrane_2"/>
    <property type="match status" value="1"/>
</dbReference>
<dbReference type="Pfam" id="PF00005">
    <property type="entry name" value="ABC_tran"/>
    <property type="match status" value="1"/>
</dbReference>
<dbReference type="SMART" id="SM00382">
    <property type="entry name" value="AAA"/>
    <property type="match status" value="1"/>
</dbReference>
<dbReference type="SUPFAM" id="SSF90123">
    <property type="entry name" value="ABC transporter transmembrane region"/>
    <property type="match status" value="1"/>
</dbReference>
<dbReference type="SUPFAM" id="SSF52540">
    <property type="entry name" value="P-loop containing nucleoside triphosphate hydrolases"/>
    <property type="match status" value="1"/>
</dbReference>
<dbReference type="PROSITE" id="PS50929">
    <property type="entry name" value="ABC_TM1F"/>
    <property type="match status" value="1"/>
</dbReference>
<dbReference type="PROSITE" id="PS00211">
    <property type="entry name" value="ABC_TRANSPORTER_1"/>
    <property type="match status" value="1"/>
</dbReference>
<dbReference type="PROSITE" id="PS50893">
    <property type="entry name" value="ABC_TRANSPORTER_2"/>
    <property type="match status" value="1"/>
</dbReference>
<protein>
    <recommendedName>
        <fullName>Uncharacterized ABC transporter ATP-binding protein sll0182</fullName>
    </recommendedName>
</protein>
<keyword id="KW-0067">ATP-binding</keyword>
<keyword id="KW-0997">Cell inner membrane</keyword>
<keyword id="KW-1003">Cell membrane</keyword>
<keyword id="KW-0472">Membrane</keyword>
<keyword id="KW-0547">Nucleotide-binding</keyword>
<keyword id="KW-1185">Reference proteome</keyword>
<keyword id="KW-0812">Transmembrane</keyword>
<keyword id="KW-1133">Transmembrane helix</keyword>
<keyword id="KW-0813">Transport</keyword>
<accession>Q55774</accession>
<proteinExistence type="inferred from homology"/>
<gene>
    <name type="ordered locus">sll0182</name>
</gene>